<protein>
    <recommendedName>
        <fullName>RNA-directed RNA polymerase L</fullName>
        <shortName>Protein L</shortName>
    </recommendedName>
    <alternativeName>
        <fullName>Large structural protein</fullName>
    </alternativeName>
    <alternativeName>
        <fullName>Replicase</fullName>
    </alternativeName>
    <alternativeName>
        <fullName>Transcriptase</fullName>
    </alternativeName>
    <domain>
        <recommendedName>
            <fullName>RNA-directed RNA polymerase</fullName>
            <ecNumber evidence="3">2.7.7.48</ecNumber>
        </recommendedName>
    </domain>
    <domain>
        <recommendedName>
            <fullName evidence="2">GTP phosphohydrolase</fullName>
            <ecNumber evidence="2">3.6.1.-</ecNumber>
        </recommendedName>
    </domain>
    <domain>
        <recommendedName>
            <fullName evidence="7">GDP polyribonucleotidyltransferase</fullName>
            <ecNumber evidence="2">2.7.7.88</ecNumber>
        </recommendedName>
        <alternativeName>
            <fullName evidence="7">PRNTase</fullName>
        </alternativeName>
    </domain>
    <domain>
        <recommendedName>
            <fullName evidence="7">mRNA cap methyltransferase</fullName>
            <ecNumber evidence="2">2.1.1.375</ecNumber>
        </recommendedName>
        <alternativeName>
            <fullName evidence="2">mRNA (guanine-N(7)-)-methyltransferase</fullName>
            <shortName evidence="2">G-N7-MTase</shortName>
        </alternativeName>
        <alternativeName>
            <fullName evidence="2">mRNA (nucleoside-2'-O-)-methyltransferase</fullName>
            <shortName evidence="2">N1-2'-O-MTase</shortName>
        </alternativeName>
    </domain>
</protein>
<feature type="chain" id="PRO_0000142735" description="RNA-directed RNA polymerase L">
    <location>
        <begin position="1"/>
        <end position="2183"/>
    </location>
</feature>
<feature type="domain" description="RdRp catalytic" evidence="5">
    <location>
        <begin position="656"/>
        <end position="840"/>
    </location>
</feature>
<feature type="domain" description="Mononegavirus-type SAM-dependent 2'-O-MTase" evidence="6">
    <location>
        <begin position="1755"/>
        <end position="1958"/>
    </location>
</feature>
<feature type="binding site" evidence="4">
    <location>
        <begin position="1785"/>
        <end position="1794"/>
    </location>
    <ligand>
        <name>ATP</name>
        <dbReference type="ChEBI" id="CHEBI:30616"/>
    </ligand>
</feature>
<comment type="function">
    <text evidence="2">RNA-directed RNA polymerase that catalyzes the transcription of viral mRNAs, their capping and polyadenylation. The template is composed of the viral RNA tightly encapsidated by the nucleoprotein (N). The viral polymerase binds to the genomic RNA at the 3' leader promoter, and transcribes subsequently all viral mRNAs with a decreasing efficiency. The first gene is the most transcribed, and the last the least transcribed. The viral phosphoprotein acts as a processivity factor. Capping is concomitant with initiation of mRNA transcription. Indeed, a GDP polyribonucleotidyl transferase (PRNTase) adds the cap structure when the nascent RNA chain length has reached few nucleotides. Ribose 2'-O methylation of viral mRNA cap precedes and facilitates subsequent guanine-N-7 methylation, both activities being carried by the viral polymerase. Polyadenylation of mRNAs occur by a stuttering mechanism at a slipery stop site present at the end viral genes. After finishing transcription of a mRNA, the polymerase can resume transcription of the downstream gene.</text>
</comment>
<comment type="function">
    <text evidence="2">RNA-directed RNA polymerase that catalyzes the replication of viral genomic RNA. The template is composed of the viral RNA tightly encapsidated by the nucleoprotein (N). The replicase mode is dependent on intracellular N protein concentration. In this mode, the polymerase replicates the whole viral genome without recognizing transcriptional signals, and the replicated genome is not caped or polyadenylated.</text>
</comment>
<comment type="catalytic activity">
    <reaction evidence="5">
        <text>RNA(n) + a ribonucleoside 5'-triphosphate = RNA(n+1) + diphosphate</text>
        <dbReference type="Rhea" id="RHEA:21248"/>
        <dbReference type="Rhea" id="RHEA-COMP:14527"/>
        <dbReference type="Rhea" id="RHEA-COMP:17342"/>
        <dbReference type="ChEBI" id="CHEBI:33019"/>
        <dbReference type="ChEBI" id="CHEBI:61557"/>
        <dbReference type="ChEBI" id="CHEBI:140395"/>
        <dbReference type="EC" id="2.7.7.48"/>
    </reaction>
</comment>
<comment type="catalytic activity">
    <reaction evidence="2">
        <text>a 5'-end (5'-triphosphoguanosine)-adenylyl-adenylyl-cytidylyl-adenosine in mRNA + 2 S-adenosyl-L-methionine = a 5'-end (N(7)-methyl 5'-triphosphoguanosine)-(2'-O-methyladenylyl)-adenylyl-cytidylyl-adenosine in mRNA + 2 S-adenosyl-L-homocysteine + H(+)</text>
        <dbReference type="Rhea" id="RHEA:65376"/>
        <dbReference type="Rhea" id="RHEA-COMP:16797"/>
        <dbReference type="Rhea" id="RHEA-COMP:16798"/>
        <dbReference type="ChEBI" id="CHEBI:15378"/>
        <dbReference type="ChEBI" id="CHEBI:57856"/>
        <dbReference type="ChEBI" id="CHEBI:59789"/>
        <dbReference type="ChEBI" id="CHEBI:156483"/>
        <dbReference type="ChEBI" id="CHEBI:156484"/>
        <dbReference type="EC" id="2.1.1.375"/>
    </reaction>
</comment>
<comment type="catalytic activity">
    <reaction evidence="2">
        <text>a 5'-end (5'-triphosphoguanosine)-adenylyl-adenylyl-cytidylyl-adenosine in mRNA + S-adenosyl-L-methionine = a 5'-end (5'-triphosphoguanosine)-(2'-O-methyladenylyl)-adenylyl-cytidylyl-adenosine in mRNA + S-adenosyl-L-homocysteine + H(+)</text>
        <dbReference type="Rhea" id="RHEA:65380"/>
        <dbReference type="Rhea" id="RHEA-COMP:16797"/>
        <dbReference type="Rhea" id="RHEA-COMP:16801"/>
        <dbReference type="ChEBI" id="CHEBI:15378"/>
        <dbReference type="ChEBI" id="CHEBI:57856"/>
        <dbReference type="ChEBI" id="CHEBI:59789"/>
        <dbReference type="ChEBI" id="CHEBI:156482"/>
        <dbReference type="ChEBI" id="CHEBI:156484"/>
    </reaction>
</comment>
<comment type="catalytic activity">
    <reaction evidence="3">
        <text>a 5'-end triphospho-adenylyl-adenylyl-cytidylyl-adenosine in mRNA + GDP + H(+) = a 5'-end (5'-triphosphoguanosine)-adenylyl-adenylyl-cytidylyl-adenosine in mRNA + diphosphate</text>
        <dbReference type="Rhea" id="RHEA:65436"/>
        <dbReference type="Rhea" id="RHEA-COMP:16797"/>
        <dbReference type="Rhea" id="RHEA-COMP:16799"/>
        <dbReference type="ChEBI" id="CHEBI:15378"/>
        <dbReference type="ChEBI" id="CHEBI:33019"/>
        <dbReference type="ChEBI" id="CHEBI:58189"/>
        <dbReference type="ChEBI" id="CHEBI:156484"/>
        <dbReference type="ChEBI" id="CHEBI:156503"/>
        <dbReference type="EC" id="2.7.7.88"/>
    </reaction>
</comment>
<comment type="catalytic activity">
    <reaction evidence="2">
        <text>a 5'-end (5'-triphosphoguanosine)-(2'-O-methyladenylyl)-adenylyl-cytidylyl-adenosine in mRNA + S-adenosyl-L-methionine = a 5'-end (N(7)-methyl 5'-triphosphoguanosine)-(2'-O-methyladenylyl)-adenylyl-cytidylyl-adenosine in mRNA + S-adenosyl-L-homocysteine</text>
        <dbReference type="Rhea" id="RHEA:65440"/>
        <dbReference type="Rhea" id="RHEA-COMP:16798"/>
        <dbReference type="Rhea" id="RHEA-COMP:16801"/>
        <dbReference type="ChEBI" id="CHEBI:57856"/>
        <dbReference type="ChEBI" id="CHEBI:59789"/>
        <dbReference type="ChEBI" id="CHEBI:156482"/>
        <dbReference type="ChEBI" id="CHEBI:156483"/>
    </reaction>
</comment>
<comment type="catalytic activity">
    <reaction evidence="3">
        <text>GTP + H2O = GDP + phosphate + H(+)</text>
        <dbReference type="Rhea" id="RHEA:19669"/>
        <dbReference type="ChEBI" id="CHEBI:15377"/>
        <dbReference type="ChEBI" id="CHEBI:15378"/>
        <dbReference type="ChEBI" id="CHEBI:37565"/>
        <dbReference type="ChEBI" id="CHEBI:43474"/>
        <dbReference type="ChEBI" id="CHEBI:58189"/>
    </reaction>
</comment>
<comment type="subunit">
    <text evidence="1">Interacts with the P protein.</text>
</comment>
<comment type="subcellular location">
    <subcellularLocation>
        <location evidence="7">Virion</location>
    </subcellularLocation>
    <subcellularLocation>
        <location evidence="1">Host cytoplasm</location>
    </subcellularLocation>
</comment>
<comment type="similarity">
    <text evidence="7">Belongs to the paramyxovirus L protein family.</text>
</comment>
<gene>
    <name type="primary">L</name>
</gene>
<proteinExistence type="inferred from homology"/>
<evidence type="ECO:0000250" key="1"/>
<evidence type="ECO:0000250" key="2">
    <source>
        <dbReference type="UniProtKB" id="P03523"/>
    </source>
</evidence>
<evidence type="ECO:0000250" key="3">
    <source>
        <dbReference type="UniProtKB" id="P28887"/>
    </source>
</evidence>
<evidence type="ECO:0000255" key="4"/>
<evidence type="ECO:0000255" key="5">
    <source>
        <dbReference type="PROSITE-ProRule" id="PRU00539"/>
    </source>
</evidence>
<evidence type="ECO:0000255" key="6">
    <source>
        <dbReference type="PROSITE-ProRule" id="PRU00923"/>
    </source>
</evidence>
<evidence type="ECO:0000305" key="7"/>
<reference key="1">
    <citation type="journal article" date="1995" name="J. Gen. Virol.">
        <title>Sequencing and analysis of the nucleocapsid (N) and polymerase (L) genes and the terminal extragenic domains of the vaccine strain of rinderpest virus.</title>
        <authorList>
            <person name="Baron M.D."/>
            <person name="Barrett T."/>
        </authorList>
    </citation>
    <scope>NUCLEOTIDE SEQUENCE [GENOMIC RNA]</scope>
</reference>
<dbReference type="EC" id="2.7.7.48" evidence="3"/>
<dbReference type="EC" id="3.6.1.-" evidence="2"/>
<dbReference type="EC" id="2.7.7.88" evidence="2"/>
<dbReference type="EC" id="2.1.1.375" evidence="2"/>
<dbReference type="EMBL" id="Z30698">
    <property type="protein sequence ID" value="CAA83184.1"/>
    <property type="molecule type" value="Genomic_RNA"/>
</dbReference>
<dbReference type="EMBL" id="Z30697">
    <property type="protein sequence ID" value="CAA83183.1"/>
    <property type="molecule type" value="Genomic_RNA"/>
</dbReference>
<dbReference type="PIR" id="S47307">
    <property type="entry name" value="S47307"/>
</dbReference>
<dbReference type="SMR" id="P41357"/>
<dbReference type="Proteomes" id="UP000008654">
    <property type="component" value="Genome"/>
</dbReference>
<dbReference type="GO" id="GO:0030430">
    <property type="term" value="C:host cell cytoplasm"/>
    <property type="evidence" value="ECO:0007669"/>
    <property type="project" value="UniProtKB-SubCell"/>
</dbReference>
<dbReference type="GO" id="GO:0044423">
    <property type="term" value="C:virion component"/>
    <property type="evidence" value="ECO:0007669"/>
    <property type="project" value="UniProtKB-KW"/>
</dbReference>
<dbReference type="GO" id="GO:0005524">
    <property type="term" value="F:ATP binding"/>
    <property type="evidence" value="ECO:0007669"/>
    <property type="project" value="UniProtKB-KW"/>
</dbReference>
<dbReference type="GO" id="GO:0003924">
    <property type="term" value="F:GTPase activity"/>
    <property type="evidence" value="ECO:0007669"/>
    <property type="project" value="RHEA"/>
</dbReference>
<dbReference type="GO" id="GO:0004482">
    <property type="term" value="F:mRNA 5'-cap (guanine-N7-)-methyltransferase activity"/>
    <property type="evidence" value="ECO:0007669"/>
    <property type="project" value="InterPro"/>
</dbReference>
<dbReference type="GO" id="GO:0003968">
    <property type="term" value="F:RNA-directed RNA polymerase activity"/>
    <property type="evidence" value="ECO:0007669"/>
    <property type="project" value="UniProtKB-KW"/>
</dbReference>
<dbReference type="InterPro" id="IPR039736">
    <property type="entry name" value="L_poly_C"/>
</dbReference>
<dbReference type="InterPro" id="IPR026890">
    <property type="entry name" value="Mononeg_mRNAcap"/>
</dbReference>
<dbReference type="InterPro" id="IPR014023">
    <property type="entry name" value="Mononeg_RNA_pol_cat"/>
</dbReference>
<dbReference type="InterPro" id="IPR025786">
    <property type="entry name" value="Mononega_L_MeTrfase"/>
</dbReference>
<dbReference type="InterPro" id="IPR016269">
    <property type="entry name" value="RNA-dir_pol_paramyxovirus"/>
</dbReference>
<dbReference type="NCBIfam" id="TIGR04198">
    <property type="entry name" value="paramyx_RNAcap"/>
    <property type="match status" value="1"/>
</dbReference>
<dbReference type="Pfam" id="PF14318">
    <property type="entry name" value="Mononeg_mRNAcap"/>
    <property type="match status" value="1"/>
</dbReference>
<dbReference type="Pfam" id="PF00946">
    <property type="entry name" value="Mononeg_RNA_pol"/>
    <property type="match status" value="1"/>
</dbReference>
<dbReference type="PIRSF" id="PIRSF000830">
    <property type="entry name" value="RNA_pol_ParamyxoV"/>
    <property type="match status" value="1"/>
</dbReference>
<dbReference type="PROSITE" id="PS50526">
    <property type="entry name" value="RDRP_SSRNA_NEG_NONSEG"/>
    <property type="match status" value="1"/>
</dbReference>
<dbReference type="PROSITE" id="PS51590">
    <property type="entry name" value="SAM_MT_MNV_L"/>
    <property type="match status" value="1"/>
</dbReference>
<organismHost>
    <name type="scientific">Bos indicus</name>
    <name type="common">Zebu</name>
    <dbReference type="NCBI Taxonomy" id="9915"/>
</organismHost>
<organismHost>
    <name type="scientific">Bos taurus</name>
    <name type="common">Bovine</name>
    <dbReference type="NCBI Taxonomy" id="9913"/>
</organismHost>
<organismHost>
    <name type="scientific">Bubalus bubalis</name>
    <name type="common">Domestic water buffalo</name>
    <dbReference type="NCBI Taxonomy" id="89462"/>
</organismHost>
<organismHost>
    <name type="scientific">Capra hircus</name>
    <name type="common">Goat</name>
    <dbReference type="NCBI Taxonomy" id="9925"/>
</organismHost>
<organismHost>
    <name type="scientific">Gazella</name>
    <name type="common">gazelles</name>
    <dbReference type="NCBI Taxonomy" id="9933"/>
</organismHost>
<organismHost>
    <name type="scientific">Giraffa camelopardalis</name>
    <name type="common">Giraffe</name>
    <dbReference type="NCBI Taxonomy" id="9894"/>
</organismHost>
<organismHost>
    <name type="scientific">Hippopotamus</name>
    <dbReference type="NCBI Taxonomy" id="9832"/>
</organismHost>
<organismHost>
    <name type="scientific">Ovis aries</name>
    <name type="common">Sheep</name>
    <dbReference type="NCBI Taxonomy" id="9940"/>
</organismHost>
<organismHost>
    <name type="scientific">Suidae</name>
    <name type="common">pigs</name>
    <dbReference type="NCBI Taxonomy" id="9821"/>
</organismHost>
<organism>
    <name type="scientific">Rinderpest virus (strain RBOK)</name>
    <name type="common">RDV</name>
    <dbReference type="NCBI Taxonomy" id="36409"/>
    <lineage>
        <taxon>Viruses</taxon>
        <taxon>Riboviria</taxon>
        <taxon>Orthornavirae</taxon>
        <taxon>Negarnaviricota</taxon>
        <taxon>Haploviricotina</taxon>
        <taxon>Monjiviricetes</taxon>
        <taxon>Mononegavirales</taxon>
        <taxon>Paramyxoviridae</taxon>
        <taxon>Orthoparamyxovirinae</taxon>
        <taxon>Morbillivirus</taxon>
        <taxon>Morbillivirus pecoris</taxon>
        <taxon>Rinderpest morbillivirus</taxon>
    </lineage>
</organism>
<sequence length="2183" mass="248110">MDSLSVNQILYPEVHLDSPIVTNKLVAILEYARIPHKYVLEDPTLCKNIKHRLDSGFSNQMVINNVEIGNVVQSKLKGYPNHEHIPYPECNQELFIARDKKATEKIRSLFKKGTTLYTKISDKVCTCLETANSRLGLGADLGIGIKEKILSLSLYMQSSQWYEPFLFWFTIKTEMRSTIKSSVHTSHRRRYVPSFFSGDSFEILISRDLVAIVHRRLHHVYYLTFELVLMYCDIIEGRLMTETAMVIDPRYTELLERVRYMWKLIDGFFPTLGNSTYQVVALLEPLSLAYLQLRDVTTELRGAFLNHCFTEIREILNQNGVTDDNTYHEIVEALDYIFITDDIHLTGEIFSFFRSFGHPRLEAITAADNVRKHMNQPKVIVYETLMKGHAIFCGIIINGYRDRHGGSWPPIHLPVHAATSIRNAQASGEGLTYEQCVDNWKSFAGIRFGCFMPLSLDSDLTMYLKDKALAALKKEWDSAYPKEFLRYNPPKSTSSRRLVDVFLNDSTFDPYNMIMYVVSGDYLRDPDFNSSYSLKEKEIKETGRLFAKMTYKMRACQVIAENLISNGIGKYFRDNGMAKDEHDLTKALHTLAVSGVPKDFKDNYRGGPRAKTFSSKKTHTGAGISRVSRNEANYRSPEQRGCNTGGPDQIESYETVSAFITADLKKYCLNWRYETISLFAQRLNEIYGLPSFFQWLHRRLERSVLYVSDPHCPPDLDSHANLDNVPNDQIFIKYPMGGIEGYCQKLWTISTIPYLYLAAHESGVRIASLVQGDNQTIAVTKRVPSSWPYHLKKREAARVTREYFCLLRQRLHDIGHHLKANETIVSSHFFVYSKGIYYDGLLISQSLKSIARCVFWSETIVDETRAACSNIATTIAKSIERGFDRYLAYSLNILKVIQQILISLGFTINSTMTQDVVVPLLSNHDLLIRMALLPAPIGGMNYLNMSRLFVRNIGDPVTSSIADLKRMIGASLMPEETLHQVMTQQPGDSSFLDWASDPYSANLVCIQSITRLLKNITAKYVLINSPNPMLRGLFHDDSKEEDEQLATFLMDRSVIVPRAAHEILDHSITGAREAIAGMLDTTKGLIRTSSRRGGLTTRVIARLSTYDYEQFRSGMVLLTGSKRNYLIDRDSCSVQLARALRSHMWARLARGRPIYGLEVPDVLESMRGHLIQRHATCILCDFGSANYGWFFVPSNCQLDDIDRETSALRVPYIGSTTDERTDMKLAFVKSPSQSLRSAVRIATVYSWAYGDDDKSWNEALKLAQQRAKVSLEELKMITPISTSTNLAHRLRDRSTQVKYSGTSLVRVARYTTISNDNLSFVISDKKVDTNFIYQQGMLLGLGVLETLFRLDKDTGPSNTVLHLHVETDCCVIPMVDHPRIPSLHELKFRRELCTNPLIYDSAPIIDREATKLYTQSHRRHLVEFVTWSTSQLYHILAKSTALSMIDLVTKFEKDHMNEVSALIGDDDINSFITEFLLVEPRLFTVYLGQCTAINWAFDIHYHRPSGKYQMGELLTSFLARMSKSVFKVFVNALSHPKIYRKFWHSGIIEPIHGPSLDTQNLHITVCNMIYSCYMTYLDLLLNDELDEFTYLLCESDEDIVADRFDNIQARHLCVLSDLYCNPRGCPTIRGLQPVEKCAIMTKHIEAEAKLSPAGPSWNIGPIVIDHFSCSLTYLRRGSIKQIRLRVDPGFIFEALTVTDPQKPNFQHEQAADMHISNFRPPYDGVAELLGTINSSKHNLPILGTGVYNYEVHAFRRIGLNSSACYKAVEISTLIKSSMDPEEDSLFLGEGSGSMLITYKEILKLKKCFYNSGVSAESRSGQRELAPYPSEVSLVEHQLGAEKTVKVLFNGRPEVTWIGSVDCFNYIISNIQTSSLGLIHSDIETLPTKDITEKLEELSAILALALLLGKVGSVLVIKVMPISGDYVQGFMSYMVPYYREVLIIYPRYSNFISTEAYLVLLGLRANRLIDPERIKQQVMESGIRTIPGLVGHILSIKQLNCIQSQAGPAITRGEINPILRKLTSIERILISCGLTINGTKICSDVVHHDISSGPDGLLNSSIILLQELARFKDNQRSQQGMFHAYPVLLSSRQRELISRVARKFWGYILLYSSDRRLLSRLVSNLKSGYLLFDLHQNLFMKNLSKSEKQLIRTGGLKREWLFKLTTKEIKEWFKLIGYSALIRE</sequence>
<keyword id="KW-0067">ATP-binding</keyword>
<keyword id="KW-1035">Host cytoplasm</keyword>
<keyword id="KW-0378">Hydrolase</keyword>
<keyword id="KW-0489">Methyltransferase</keyword>
<keyword id="KW-0506">mRNA capping</keyword>
<keyword id="KW-0507">mRNA processing</keyword>
<keyword id="KW-0511">Multifunctional enzyme</keyword>
<keyword id="KW-0547">Nucleotide-binding</keyword>
<keyword id="KW-0548">Nucleotidyltransferase</keyword>
<keyword id="KW-1185">Reference proteome</keyword>
<keyword id="KW-0696">RNA-directed RNA polymerase</keyword>
<keyword id="KW-0949">S-adenosyl-L-methionine</keyword>
<keyword id="KW-0808">Transferase</keyword>
<keyword id="KW-0693">Viral RNA replication</keyword>
<keyword id="KW-0946">Virion</keyword>
<accession>P41357</accession>
<name>L_RINDR</name>